<proteinExistence type="inferred from homology"/>
<protein>
    <recommendedName>
        <fullName>Probable deoxyuridine 5'-triphosphate nucleotidohydrolase</fullName>
        <shortName>dUTPase</shortName>
        <ecNumber>3.6.1.23</ecNumber>
    </recommendedName>
    <alternativeName>
        <fullName>dUTP pyrophosphatase</fullName>
    </alternativeName>
</protein>
<keyword id="KW-0378">Hydrolase</keyword>
<keyword id="KW-0460">Magnesium</keyword>
<keyword id="KW-0479">Metal-binding</keyword>
<keyword id="KW-0546">Nucleotide metabolism</keyword>
<keyword id="KW-1185">Reference proteome</keyword>
<organism>
    <name type="scientific">Sulfolobus islandicus rod-shaped virus 1</name>
    <name type="common">SIRV-1</name>
    <name type="synonym">Sulfolobus virus SIRV-1</name>
    <dbReference type="NCBI Taxonomy" id="157898"/>
    <lineage>
        <taxon>Viruses</taxon>
        <taxon>Adnaviria</taxon>
        <taxon>Zilligvirae</taxon>
        <taxon>Taleaviricota</taxon>
        <taxon>Tokiviricetes</taxon>
        <taxon>Ligamenvirales</taxon>
        <taxon>Rudiviridae</taxon>
        <taxon>Icerudivirus</taxon>
        <taxon>Icerudivirus SIRV1</taxon>
    </lineage>
</organism>
<sequence length="158" mass="17906">MILSDRDIKTYINSKKLVINPLSEDTIRENGVDLKIGNEIVRIKENMEKEVGDEFIIYPNEHVLLTTKEYIKLSNDIIAFCNLRSTFARKGLLIPPTIVDAGFEGQLTIELVGSSIPVKLKSGERFLHLIFARTLTPVEKPYNGKYQKQKGVTLAKED</sequence>
<name>DUT_SIRV1</name>
<comment type="function">
    <text evidence="1">This enzyme is involved in nucleotide metabolism: it produces dUMP, the immediate precursor of thymidine nucleotides and it decreases the intracellular concentration of dUTP so that uracil cannot be incorporated into DNA. It does probably not deaminate dCTP.</text>
</comment>
<comment type="catalytic activity">
    <reaction evidence="1">
        <text>dUTP + H2O = dUMP + diphosphate + H(+)</text>
        <dbReference type="Rhea" id="RHEA:10248"/>
        <dbReference type="ChEBI" id="CHEBI:15377"/>
        <dbReference type="ChEBI" id="CHEBI:15378"/>
        <dbReference type="ChEBI" id="CHEBI:33019"/>
        <dbReference type="ChEBI" id="CHEBI:61555"/>
        <dbReference type="ChEBI" id="CHEBI:246422"/>
        <dbReference type="EC" id="3.6.1.23"/>
    </reaction>
</comment>
<comment type="cofactor">
    <cofactor evidence="1">
        <name>Mg(2+)</name>
        <dbReference type="ChEBI" id="CHEBI:18420"/>
    </cofactor>
</comment>
<comment type="pathway">
    <text>Pyrimidine metabolism; dUMP biosynthesis; dUMP from dCTP (dUTP route): step 1/2.</text>
</comment>
<comment type="similarity">
    <text evidence="2">Belongs to the dUTPase family.</text>
</comment>
<gene>
    <name type="ORF">158a</name>
</gene>
<dbReference type="EC" id="3.6.1.23"/>
<dbReference type="EMBL" id="AF022221">
    <property type="protein sequence ID" value="AAC15873.1"/>
    <property type="molecule type" value="Genomic_DNA"/>
</dbReference>
<dbReference type="EMBL" id="AJ414696">
    <property type="protein sequence ID" value="CAC93972.1"/>
    <property type="molecule type" value="Genomic_DNA"/>
</dbReference>
<dbReference type="EMBL" id="AJ748296">
    <property type="protein sequence ID" value="CAG38836.1"/>
    <property type="molecule type" value="Genomic_DNA"/>
</dbReference>
<dbReference type="SMR" id="O71028"/>
<dbReference type="KEGG" id="vg:951366"/>
<dbReference type="OrthoDB" id="13481at10239"/>
<dbReference type="BRENDA" id="3.6.1.23">
    <property type="organism ID" value="410"/>
</dbReference>
<dbReference type="UniPathway" id="UPA00610">
    <property type="reaction ID" value="UER00665"/>
</dbReference>
<dbReference type="Proteomes" id="UP000002270">
    <property type="component" value="Genome"/>
</dbReference>
<dbReference type="Proteomes" id="UP000223181">
    <property type="component" value="Segment"/>
</dbReference>
<dbReference type="GO" id="GO:0008829">
    <property type="term" value="F:dCTP deaminase activity"/>
    <property type="evidence" value="ECO:0007669"/>
    <property type="project" value="InterPro"/>
</dbReference>
<dbReference type="GO" id="GO:0004170">
    <property type="term" value="F:dUTP diphosphatase activity"/>
    <property type="evidence" value="ECO:0007669"/>
    <property type="project" value="UniProtKB-EC"/>
</dbReference>
<dbReference type="GO" id="GO:0046872">
    <property type="term" value="F:metal ion binding"/>
    <property type="evidence" value="ECO:0007669"/>
    <property type="project" value="UniProtKB-KW"/>
</dbReference>
<dbReference type="GO" id="GO:0006226">
    <property type="term" value="P:dUMP biosynthetic process"/>
    <property type="evidence" value="ECO:0007669"/>
    <property type="project" value="UniProtKB-UniPathway"/>
</dbReference>
<dbReference type="GO" id="GO:0006229">
    <property type="term" value="P:dUTP biosynthetic process"/>
    <property type="evidence" value="ECO:0007669"/>
    <property type="project" value="InterPro"/>
</dbReference>
<dbReference type="CDD" id="cd07557">
    <property type="entry name" value="trimeric_dUTPase"/>
    <property type="match status" value="1"/>
</dbReference>
<dbReference type="Gene3D" id="2.70.40.10">
    <property type="match status" value="1"/>
</dbReference>
<dbReference type="HAMAP" id="MF_00146">
    <property type="entry name" value="dCTP_deaminase"/>
    <property type="match status" value="1"/>
</dbReference>
<dbReference type="InterPro" id="IPR011962">
    <property type="entry name" value="dCTP_deaminase"/>
</dbReference>
<dbReference type="InterPro" id="IPR036157">
    <property type="entry name" value="dUTPase-like_sf"/>
</dbReference>
<dbReference type="InterPro" id="IPR033704">
    <property type="entry name" value="dUTPase_trimeric"/>
</dbReference>
<dbReference type="NCBIfam" id="TIGR02274">
    <property type="entry name" value="dCTP_deam"/>
    <property type="match status" value="1"/>
</dbReference>
<dbReference type="PANTHER" id="PTHR42680">
    <property type="entry name" value="DCTP DEAMINASE"/>
    <property type="match status" value="1"/>
</dbReference>
<dbReference type="PANTHER" id="PTHR42680:SF3">
    <property type="entry name" value="DCTP DEAMINASE"/>
    <property type="match status" value="1"/>
</dbReference>
<dbReference type="Pfam" id="PF22769">
    <property type="entry name" value="DCD"/>
    <property type="match status" value="1"/>
</dbReference>
<dbReference type="SUPFAM" id="SSF51283">
    <property type="entry name" value="dUTPase-like"/>
    <property type="match status" value="1"/>
</dbReference>
<organismHost>
    <name type="scientific">Saccharolobus islandicus</name>
    <name type="common">Sulfolobus islandicus</name>
    <dbReference type="NCBI Taxonomy" id="43080"/>
</organismHost>
<reference key="1">
    <citation type="journal article" date="1998" name="J. Biol. Chem.">
        <title>Biochemical and phylogenetic characterization of the dUTPase from the archaeal virus SIRV.</title>
        <authorList>
            <person name="Prangishvili D."/>
            <person name="Klenk H.-P."/>
            <person name="Jakobs G."/>
            <person name="Schmiechen A."/>
            <person name="Hanselmann C."/>
            <person name="Holz I."/>
            <person name="Zillig W."/>
        </authorList>
    </citation>
    <scope>NUCLEOTIDE SEQUENCE [GENOMIC DNA]</scope>
    <scope>FUNCTION</scope>
    <scope>COFACTOR</scope>
    <scope>ENZYME ACTIVITY</scope>
</reference>
<reference key="2">
    <citation type="journal article" date="2001" name="Virology">
        <title>Sequences and replication of genomes of the archaeal rudiviruses SIRV1 and SIRV2: relationships to the archaeal lipothrixvirus SIFV and some eukaryal viruses.</title>
        <authorList>
            <person name="Peng X."/>
            <person name="Blum H."/>
            <person name="She Q."/>
            <person name="Mallok S."/>
            <person name="Bruegger K."/>
            <person name="Garrett R.A."/>
            <person name="Zillig W."/>
            <person name="Prangishvili D."/>
        </authorList>
    </citation>
    <scope>NUCLEOTIDE SEQUENCE [LARGE SCALE GENOMIC DNA]</scope>
    <source>
        <strain>Isolate variant VIII</strain>
    </source>
</reference>
<reference key="3">
    <citation type="journal article" date="2004" name="Mol. Microbiol.">
        <title>Multiple variants of the archaeal DNA rudivirus SIRV1 in a single host and a novel mechanism of genomic variation.</title>
        <authorList>
            <person name="Peng X."/>
            <person name="Kessler A."/>
            <person name="Phan H."/>
            <person name="Garrett R.A."/>
            <person name="Prangishvili D."/>
        </authorList>
    </citation>
    <scope>NUCLEOTIDE SEQUENCE [LARGE SCALE GENOMIC DNA]</scope>
    <source>
        <strain>Isolate variant XX</strain>
    </source>
</reference>
<evidence type="ECO:0000269" key="1">
    <source>
    </source>
</evidence>
<evidence type="ECO:0000305" key="2"/>
<feature type="chain" id="PRO_0000342288" description="Probable deoxyuridine 5'-triphosphate nucleotidohydrolase">
    <location>
        <begin position="1"/>
        <end position="158"/>
    </location>
</feature>
<feature type="sequence variant" description="In strain: Isolate variant XX.">
    <original>T</original>
    <variation>R</variation>
    <location>
        <position position="10"/>
    </location>
</feature>
<feature type="sequence variant" description="In strain: Isolate variant XX.">
    <original>K</original>
    <variation>N</variation>
    <location>
        <position position="15"/>
    </location>
</feature>
<feature type="sequence variant" description="In strain: Isolate variant XX.">
    <original>N</original>
    <variation>D</variation>
    <location>
        <position position="20"/>
    </location>
</feature>
<feature type="sequence variant" description="In strain: Isolate variant XX.">
    <original>R</original>
    <variation>H</variation>
    <location>
        <position position="133"/>
    </location>
</feature>
<feature type="sequence variant" description="In strain: Isolate variant XX.">
    <original>K</original>
    <variation>N</variation>
    <location>
        <position position="148"/>
    </location>
</feature>
<accession>O71028</accession>
<accession>Q5TJA2</accession>
<accession>Q777W3</accession>